<feature type="chain" id="PRO_0000301272" description="Phosphoglucosamine mutase">
    <location>
        <begin position="1"/>
        <end position="444"/>
    </location>
</feature>
<feature type="active site" description="Phosphoserine intermediate" evidence="1">
    <location>
        <position position="101"/>
    </location>
</feature>
<feature type="binding site" description="via phosphate group" evidence="1">
    <location>
        <position position="101"/>
    </location>
    <ligand>
        <name>Mg(2+)</name>
        <dbReference type="ChEBI" id="CHEBI:18420"/>
    </ligand>
</feature>
<feature type="binding site" evidence="1">
    <location>
        <position position="239"/>
    </location>
    <ligand>
        <name>Mg(2+)</name>
        <dbReference type="ChEBI" id="CHEBI:18420"/>
    </ligand>
</feature>
<feature type="binding site" evidence="1">
    <location>
        <position position="241"/>
    </location>
    <ligand>
        <name>Mg(2+)</name>
        <dbReference type="ChEBI" id="CHEBI:18420"/>
    </ligand>
</feature>
<feature type="binding site" evidence="1">
    <location>
        <position position="243"/>
    </location>
    <ligand>
        <name>Mg(2+)</name>
        <dbReference type="ChEBI" id="CHEBI:18420"/>
    </ligand>
</feature>
<feature type="modified residue" description="Phosphoserine" evidence="1">
    <location>
        <position position="101"/>
    </location>
</feature>
<gene>
    <name evidence="1" type="primary">glmM</name>
    <name type="ordered locus">ABO_0324</name>
</gene>
<evidence type="ECO:0000255" key="1">
    <source>
        <dbReference type="HAMAP-Rule" id="MF_01554"/>
    </source>
</evidence>
<organism>
    <name type="scientific">Alcanivorax borkumensis (strain ATCC 700651 / DSM 11573 / NCIMB 13689 / SK2)</name>
    <dbReference type="NCBI Taxonomy" id="393595"/>
    <lineage>
        <taxon>Bacteria</taxon>
        <taxon>Pseudomonadati</taxon>
        <taxon>Pseudomonadota</taxon>
        <taxon>Gammaproteobacteria</taxon>
        <taxon>Oceanospirillales</taxon>
        <taxon>Alcanivoracaceae</taxon>
        <taxon>Alcanivorax</taxon>
    </lineage>
</organism>
<protein>
    <recommendedName>
        <fullName evidence="1">Phosphoglucosamine mutase</fullName>
        <ecNumber evidence="1">5.4.2.10</ecNumber>
    </recommendedName>
</protein>
<reference key="1">
    <citation type="journal article" date="2006" name="Nat. Biotechnol.">
        <title>Genome sequence of the ubiquitous hydrocarbon-degrading marine bacterium Alcanivorax borkumensis.</title>
        <authorList>
            <person name="Schneiker S."/>
            <person name="Martins dos Santos V.A.P."/>
            <person name="Bartels D."/>
            <person name="Bekel T."/>
            <person name="Brecht M."/>
            <person name="Buhrmester J."/>
            <person name="Chernikova T.N."/>
            <person name="Denaro R."/>
            <person name="Ferrer M."/>
            <person name="Gertler C."/>
            <person name="Goesmann A."/>
            <person name="Golyshina O.V."/>
            <person name="Kaminski F."/>
            <person name="Khachane A.N."/>
            <person name="Lang S."/>
            <person name="Linke B."/>
            <person name="McHardy A.C."/>
            <person name="Meyer F."/>
            <person name="Nechitaylo T."/>
            <person name="Puehler A."/>
            <person name="Regenhardt D."/>
            <person name="Rupp O."/>
            <person name="Sabirova J.S."/>
            <person name="Selbitschka W."/>
            <person name="Yakimov M.M."/>
            <person name="Timmis K.N."/>
            <person name="Vorhoelter F.-J."/>
            <person name="Weidner S."/>
            <person name="Kaiser O."/>
            <person name="Golyshin P.N."/>
        </authorList>
    </citation>
    <scope>NUCLEOTIDE SEQUENCE [LARGE SCALE GENOMIC DNA]</scope>
    <source>
        <strain>ATCC 700651 / DSM 11573 / NCIMB 13689 / SK2</strain>
    </source>
</reference>
<accession>Q0VSS6</accession>
<comment type="function">
    <text evidence="1">Catalyzes the conversion of glucosamine-6-phosphate to glucosamine-1-phosphate.</text>
</comment>
<comment type="catalytic activity">
    <reaction evidence="1">
        <text>alpha-D-glucosamine 1-phosphate = D-glucosamine 6-phosphate</text>
        <dbReference type="Rhea" id="RHEA:23424"/>
        <dbReference type="ChEBI" id="CHEBI:58516"/>
        <dbReference type="ChEBI" id="CHEBI:58725"/>
        <dbReference type="EC" id="5.4.2.10"/>
    </reaction>
</comment>
<comment type="cofactor">
    <cofactor evidence="1">
        <name>Mg(2+)</name>
        <dbReference type="ChEBI" id="CHEBI:18420"/>
    </cofactor>
    <text evidence="1">Binds 1 Mg(2+) ion per subunit.</text>
</comment>
<comment type="PTM">
    <text evidence="1">Activated by phosphorylation.</text>
</comment>
<comment type="similarity">
    <text evidence="1">Belongs to the phosphohexose mutase family.</text>
</comment>
<keyword id="KW-0413">Isomerase</keyword>
<keyword id="KW-0460">Magnesium</keyword>
<keyword id="KW-0479">Metal-binding</keyword>
<keyword id="KW-0597">Phosphoprotein</keyword>
<keyword id="KW-1185">Reference proteome</keyword>
<sequence>MTRKYFGTDGVRGTVGEFPITPDFVLKLGWAAGKVLGARGGSKILIGKDTRISGYMFESALEAGISAAGVDVRLLGPLPTPGIAYLTRTLSAQAGIVISASHNPYTDNGIKFFGADGRKLNDEIELEIERLLDEQMSVVSTDQIGKVRRIDDARGRYIEFCKSTAPGLDLNGMKIVVDTANGAAYHIAPDVFEELGATVVPLANQPDGFNINRDCGSTHPEALQRKVVEEKADLGVALDGDADRLLMVDHAGNLVDGDQLLFVVARDRKENGAEMDGVVGTLMSNFGLELALQAEGIEFVRAKVGDRYVMEQLDKRGWNIGGESSGHLVCLDCTTTGDGTVSALQVLAALSRRKQGLAESVADVSMLPQKMINVRGPNRDGFMENGDVQAAMADVEDRLAGNGRILLRPSGTEPLVRVMIEGKDVDRVESLCRELAEVVEKAIN</sequence>
<proteinExistence type="inferred from homology"/>
<dbReference type="EC" id="5.4.2.10" evidence="1"/>
<dbReference type="EMBL" id="AM286690">
    <property type="protein sequence ID" value="CAL15772.1"/>
    <property type="molecule type" value="Genomic_DNA"/>
</dbReference>
<dbReference type="RefSeq" id="WP_011587620.1">
    <property type="nucleotide sequence ID" value="NC_008260.1"/>
</dbReference>
<dbReference type="SMR" id="Q0VSS6"/>
<dbReference type="STRING" id="393595.ABO_0324"/>
<dbReference type="KEGG" id="abo:ABO_0324"/>
<dbReference type="eggNOG" id="COG1109">
    <property type="taxonomic scope" value="Bacteria"/>
</dbReference>
<dbReference type="HOGENOM" id="CLU_016950_7_0_6"/>
<dbReference type="OrthoDB" id="9803322at2"/>
<dbReference type="Proteomes" id="UP000008871">
    <property type="component" value="Chromosome"/>
</dbReference>
<dbReference type="GO" id="GO:0005829">
    <property type="term" value="C:cytosol"/>
    <property type="evidence" value="ECO:0007669"/>
    <property type="project" value="TreeGrafter"/>
</dbReference>
<dbReference type="GO" id="GO:0000287">
    <property type="term" value="F:magnesium ion binding"/>
    <property type="evidence" value="ECO:0007669"/>
    <property type="project" value="UniProtKB-UniRule"/>
</dbReference>
<dbReference type="GO" id="GO:0008966">
    <property type="term" value="F:phosphoglucosamine mutase activity"/>
    <property type="evidence" value="ECO:0007669"/>
    <property type="project" value="UniProtKB-UniRule"/>
</dbReference>
<dbReference type="GO" id="GO:0004615">
    <property type="term" value="F:phosphomannomutase activity"/>
    <property type="evidence" value="ECO:0007669"/>
    <property type="project" value="TreeGrafter"/>
</dbReference>
<dbReference type="GO" id="GO:0005975">
    <property type="term" value="P:carbohydrate metabolic process"/>
    <property type="evidence" value="ECO:0007669"/>
    <property type="project" value="InterPro"/>
</dbReference>
<dbReference type="GO" id="GO:0009252">
    <property type="term" value="P:peptidoglycan biosynthetic process"/>
    <property type="evidence" value="ECO:0007669"/>
    <property type="project" value="TreeGrafter"/>
</dbReference>
<dbReference type="GO" id="GO:0006048">
    <property type="term" value="P:UDP-N-acetylglucosamine biosynthetic process"/>
    <property type="evidence" value="ECO:0007669"/>
    <property type="project" value="TreeGrafter"/>
</dbReference>
<dbReference type="CDD" id="cd05802">
    <property type="entry name" value="GlmM"/>
    <property type="match status" value="1"/>
</dbReference>
<dbReference type="FunFam" id="3.30.310.50:FF:000001">
    <property type="entry name" value="Phosphoglucosamine mutase"/>
    <property type="match status" value="1"/>
</dbReference>
<dbReference type="FunFam" id="3.40.120.10:FF:000001">
    <property type="entry name" value="Phosphoglucosamine mutase"/>
    <property type="match status" value="1"/>
</dbReference>
<dbReference type="FunFam" id="3.40.120.10:FF:000002">
    <property type="entry name" value="Phosphoglucosamine mutase"/>
    <property type="match status" value="1"/>
</dbReference>
<dbReference type="Gene3D" id="3.40.120.10">
    <property type="entry name" value="Alpha-D-Glucose-1,6-Bisphosphate, subunit A, domain 3"/>
    <property type="match status" value="3"/>
</dbReference>
<dbReference type="Gene3D" id="3.30.310.50">
    <property type="entry name" value="Alpha-D-phosphohexomutase, C-terminal domain"/>
    <property type="match status" value="1"/>
</dbReference>
<dbReference type="HAMAP" id="MF_01554_B">
    <property type="entry name" value="GlmM_B"/>
    <property type="match status" value="1"/>
</dbReference>
<dbReference type="InterPro" id="IPR005844">
    <property type="entry name" value="A-D-PHexomutase_a/b/a-I"/>
</dbReference>
<dbReference type="InterPro" id="IPR016055">
    <property type="entry name" value="A-D-PHexomutase_a/b/a-I/II/III"/>
</dbReference>
<dbReference type="InterPro" id="IPR005845">
    <property type="entry name" value="A-D-PHexomutase_a/b/a-II"/>
</dbReference>
<dbReference type="InterPro" id="IPR005846">
    <property type="entry name" value="A-D-PHexomutase_a/b/a-III"/>
</dbReference>
<dbReference type="InterPro" id="IPR005843">
    <property type="entry name" value="A-D-PHexomutase_C"/>
</dbReference>
<dbReference type="InterPro" id="IPR036900">
    <property type="entry name" value="A-D-PHexomutase_C_sf"/>
</dbReference>
<dbReference type="InterPro" id="IPR016066">
    <property type="entry name" value="A-D-PHexomutase_CS"/>
</dbReference>
<dbReference type="InterPro" id="IPR005841">
    <property type="entry name" value="Alpha-D-phosphohexomutase_SF"/>
</dbReference>
<dbReference type="InterPro" id="IPR006352">
    <property type="entry name" value="GlmM_bact"/>
</dbReference>
<dbReference type="InterPro" id="IPR050060">
    <property type="entry name" value="Phosphoglucosamine_mutase"/>
</dbReference>
<dbReference type="NCBIfam" id="TIGR01455">
    <property type="entry name" value="glmM"/>
    <property type="match status" value="1"/>
</dbReference>
<dbReference type="NCBIfam" id="NF008139">
    <property type="entry name" value="PRK10887.1"/>
    <property type="match status" value="1"/>
</dbReference>
<dbReference type="PANTHER" id="PTHR42946:SF1">
    <property type="entry name" value="PHOSPHOGLUCOMUTASE (ALPHA-D-GLUCOSE-1,6-BISPHOSPHATE-DEPENDENT)"/>
    <property type="match status" value="1"/>
</dbReference>
<dbReference type="PANTHER" id="PTHR42946">
    <property type="entry name" value="PHOSPHOHEXOSE MUTASE"/>
    <property type="match status" value="1"/>
</dbReference>
<dbReference type="Pfam" id="PF02878">
    <property type="entry name" value="PGM_PMM_I"/>
    <property type="match status" value="1"/>
</dbReference>
<dbReference type="Pfam" id="PF02879">
    <property type="entry name" value="PGM_PMM_II"/>
    <property type="match status" value="1"/>
</dbReference>
<dbReference type="Pfam" id="PF02880">
    <property type="entry name" value="PGM_PMM_III"/>
    <property type="match status" value="1"/>
</dbReference>
<dbReference type="Pfam" id="PF00408">
    <property type="entry name" value="PGM_PMM_IV"/>
    <property type="match status" value="1"/>
</dbReference>
<dbReference type="PRINTS" id="PR00509">
    <property type="entry name" value="PGMPMM"/>
</dbReference>
<dbReference type="SUPFAM" id="SSF55957">
    <property type="entry name" value="Phosphoglucomutase, C-terminal domain"/>
    <property type="match status" value="1"/>
</dbReference>
<dbReference type="SUPFAM" id="SSF53738">
    <property type="entry name" value="Phosphoglucomutase, first 3 domains"/>
    <property type="match status" value="3"/>
</dbReference>
<dbReference type="PROSITE" id="PS00710">
    <property type="entry name" value="PGM_PMM"/>
    <property type="match status" value="1"/>
</dbReference>
<name>GLMM_ALCBS</name>